<protein>
    <recommendedName>
        <fullName evidence="1">Bis(5'-nucleosyl)-tetraphosphatase, symmetrical</fullName>
        <ecNumber evidence="1">3.6.1.41</ecNumber>
    </recommendedName>
    <alternativeName>
        <fullName evidence="1">Ap4A hydrolase</fullName>
    </alternativeName>
    <alternativeName>
        <fullName evidence="1">Diadenosine 5',5'''-P1,P4-tetraphosphate pyrophosphohydrolase</fullName>
    </alternativeName>
    <alternativeName>
        <fullName evidence="1">Diadenosine tetraphosphatase</fullName>
    </alternativeName>
</protein>
<proteinExistence type="inferred from homology"/>
<evidence type="ECO:0000255" key="1">
    <source>
        <dbReference type="HAMAP-Rule" id="MF_00199"/>
    </source>
</evidence>
<accession>Q1LSS3</accession>
<name>APAH_BAUCH</name>
<sequence>MSTYFIGDIHGCYDELQTILEKVAFDPLIDTLWLTGDLVARGPSSLEVLRMIRRLGNSVRIVLGNHDLHLLAVYTGIMRNRIKDHTIPLLTAPDAEDLMNWLRYQPVLQVDNKKKILMAHAGITPQWNIDTALQCASEIETVLRSESYPLFLHSIYEDIPNYWSNELSYRARLQFSTNVFTRMRYCFPNGKLDMLCKDIPNKAPEPLRPWFNLPSTIVEKYSIIFGHWSSLLGKGTPTGIYGLDTGCCWGGKLTLLCWEDKKIIQIPSQKKRNKKCSYLCYNGKGKKN</sequence>
<gene>
    <name evidence="1" type="primary">apaH</name>
    <name type="ordered locus">BCI_0562</name>
</gene>
<feature type="chain" id="PRO_1000012045" description="Bis(5'-nucleosyl)-tetraphosphatase, symmetrical">
    <location>
        <begin position="1"/>
        <end position="288"/>
    </location>
</feature>
<comment type="function">
    <text evidence="1">Hydrolyzes diadenosine 5',5'''-P1,P4-tetraphosphate to yield ADP.</text>
</comment>
<comment type="catalytic activity">
    <reaction evidence="1">
        <text>P(1),P(4)-bis(5'-adenosyl) tetraphosphate + H2O = 2 ADP + 2 H(+)</text>
        <dbReference type="Rhea" id="RHEA:24252"/>
        <dbReference type="ChEBI" id="CHEBI:15377"/>
        <dbReference type="ChEBI" id="CHEBI:15378"/>
        <dbReference type="ChEBI" id="CHEBI:58141"/>
        <dbReference type="ChEBI" id="CHEBI:456216"/>
        <dbReference type="EC" id="3.6.1.41"/>
    </reaction>
</comment>
<comment type="similarity">
    <text evidence="1">Belongs to the Ap4A hydrolase family.</text>
</comment>
<dbReference type="EC" id="3.6.1.41" evidence="1"/>
<dbReference type="EMBL" id="CP000238">
    <property type="protein sequence ID" value="ABF13981.1"/>
    <property type="molecule type" value="Genomic_DNA"/>
</dbReference>
<dbReference type="RefSeq" id="WP_011520724.1">
    <property type="nucleotide sequence ID" value="NC_007984.1"/>
</dbReference>
<dbReference type="SMR" id="Q1LSS3"/>
<dbReference type="STRING" id="374463.BCI_0562"/>
<dbReference type="KEGG" id="bci:BCI_0562"/>
<dbReference type="HOGENOM" id="CLU_056184_2_0_6"/>
<dbReference type="OrthoDB" id="9807890at2"/>
<dbReference type="Proteomes" id="UP000002427">
    <property type="component" value="Chromosome"/>
</dbReference>
<dbReference type="GO" id="GO:0008803">
    <property type="term" value="F:bis(5'-nucleosyl)-tetraphosphatase (symmetrical) activity"/>
    <property type="evidence" value="ECO:0007669"/>
    <property type="project" value="UniProtKB-UniRule"/>
</dbReference>
<dbReference type="CDD" id="cd07422">
    <property type="entry name" value="MPP_ApaH"/>
    <property type="match status" value="1"/>
</dbReference>
<dbReference type="Gene3D" id="3.60.21.10">
    <property type="match status" value="1"/>
</dbReference>
<dbReference type="HAMAP" id="MF_00199">
    <property type="entry name" value="ApaH"/>
    <property type="match status" value="1"/>
</dbReference>
<dbReference type="InterPro" id="IPR004617">
    <property type="entry name" value="ApaH"/>
</dbReference>
<dbReference type="InterPro" id="IPR004843">
    <property type="entry name" value="Calcineurin-like_PHP_ApaH"/>
</dbReference>
<dbReference type="InterPro" id="IPR029052">
    <property type="entry name" value="Metallo-depent_PP-like"/>
</dbReference>
<dbReference type="NCBIfam" id="TIGR00668">
    <property type="entry name" value="apaH"/>
    <property type="match status" value="1"/>
</dbReference>
<dbReference type="NCBIfam" id="NF001204">
    <property type="entry name" value="PRK00166.1"/>
    <property type="match status" value="1"/>
</dbReference>
<dbReference type="PANTHER" id="PTHR40942">
    <property type="match status" value="1"/>
</dbReference>
<dbReference type="PANTHER" id="PTHR40942:SF4">
    <property type="entry name" value="CYTOCHROME C5"/>
    <property type="match status" value="1"/>
</dbReference>
<dbReference type="Pfam" id="PF00149">
    <property type="entry name" value="Metallophos"/>
    <property type="match status" value="1"/>
</dbReference>
<dbReference type="PIRSF" id="PIRSF000903">
    <property type="entry name" value="B5n-ttraPtase_sm"/>
    <property type="match status" value="1"/>
</dbReference>
<dbReference type="SUPFAM" id="SSF56300">
    <property type="entry name" value="Metallo-dependent phosphatases"/>
    <property type="match status" value="1"/>
</dbReference>
<reference key="1">
    <citation type="journal article" date="2006" name="PLoS Biol.">
        <title>Metabolic complementarity and genomics of the dual bacterial symbiosis of sharpshooters.</title>
        <authorList>
            <person name="Wu D."/>
            <person name="Daugherty S.C."/>
            <person name="Van Aken S.E."/>
            <person name="Pai G.H."/>
            <person name="Watkins K.L."/>
            <person name="Khouri H."/>
            <person name="Tallon L.J."/>
            <person name="Zaborsky J.M."/>
            <person name="Dunbar H.E."/>
            <person name="Tran P.L."/>
            <person name="Moran N.A."/>
            <person name="Eisen J.A."/>
        </authorList>
    </citation>
    <scope>NUCLEOTIDE SEQUENCE [LARGE SCALE GENOMIC DNA]</scope>
</reference>
<keyword id="KW-0378">Hydrolase</keyword>
<keyword id="KW-1185">Reference proteome</keyword>
<organism>
    <name type="scientific">Baumannia cicadellinicola subsp. Homalodisca coagulata</name>
    <dbReference type="NCBI Taxonomy" id="374463"/>
    <lineage>
        <taxon>Bacteria</taxon>
        <taxon>Pseudomonadati</taxon>
        <taxon>Pseudomonadota</taxon>
        <taxon>Gammaproteobacteria</taxon>
        <taxon>Candidatus Palibaumannia</taxon>
    </lineage>
</organism>